<evidence type="ECO:0000255" key="1">
    <source>
        <dbReference type="HAMAP-Rule" id="MF_00227"/>
    </source>
</evidence>
<reference key="1">
    <citation type="journal article" date="2011" name="J. Bacteriol.">
        <title>Genome sequence of Thermotoga sp. strain RQ2, a hyperthermophilic bacterium isolated from a geothermally heated region of the seafloor near Ribeira Quente, the Azores.</title>
        <authorList>
            <person name="Swithers K.S."/>
            <person name="DiPippo J.L."/>
            <person name="Bruce D.C."/>
            <person name="Detter C."/>
            <person name="Tapia R."/>
            <person name="Han S."/>
            <person name="Saunders E."/>
            <person name="Goodwin L.A."/>
            <person name="Han J."/>
            <person name="Woyke T."/>
            <person name="Pitluck S."/>
            <person name="Pennacchio L."/>
            <person name="Nolan M."/>
            <person name="Mikhailova N."/>
            <person name="Lykidis A."/>
            <person name="Land M.L."/>
            <person name="Brettin T."/>
            <person name="Stetter K.O."/>
            <person name="Nelson K.E."/>
            <person name="Gogarten J.P."/>
            <person name="Noll K.M."/>
        </authorList>
    </citation>
    <scope>NUCLEOTIDE SEQUENCE [LARGE SCALE GENOMIC DNA]</scope>
    <source>
        <strain>RQ2</strain>
    </source>
</reference>
<sequence length="117" mass="14332">MTESFTRRERLRLRRDFLLIFKEGESLQNEYFVVLFRKNGLDYSRLGIVVKRKFGKATRRNKLKRWVREIFRRNKGVIPKGFDIVVIPRKKLSEEFERVDFWTIREKLLNLLKRIEG</sequence>
<gene>
    <name evidence="1" type="primary">rnpA</name>
    <name type="ordered locus">TRQ2_1355</name>
</gene>
<comment type="function">
    <text evidence="1">RNaseP catalyzes the removal of the 5'-leader sequence from pre-tRNA to produce the mature 5'-terminus. It can also cleave other RNA substrates such as 4.5S RNA. The protein component plays an auxiliary but essential role in vivo by binding to the 5'-leader sequence and broadening the substrate specificity of the ribozyme.</text>
</comment>
<comment type="catalytic activity">
    <reaction evidence="1">
        <text>Endonucleolytic cleavage of RNA, removing 5'-extranucleotides from tRNA precursor.</text>
        <dbReference type="EC" id="3.1.26.5"/>
    </reaction>
</comment>
<comment type="subunit">
    <text evidence="1">Consists of a catalytic RNA component (M1 or rnpB) and a protein subunit.</text>
</comment>
<comment type="similarity">
    <text evidence="1">Belongs to the RnpA family.</text>
</comment>
<name>RNPA_THESQ</name>
<protein>
    <recommendedName>
        <fullName evidence="1">Ribonuclease P protein component</fullName>
        <shortName evidence="1">RNase P protein</shortName>
        <shortName evidence="1">RNaseP protein</shortName>
        <ecNumber evidence="1">3.1.26.5</ecNumber>
    </recommendedName>
    <alternativeName>
        <fullName evidence="1">Protein C5</fullName>
    </alternativeName>
</protein>
<accession>B1LBK1</accession>
<dbReference type="EC" id="3.1.26.5" evidence="1"/>
<dbReference type="EMBL" id="CP000969">
    <property type="protein sequence ID" value="ACB09699.1"/>
    <property type="molecule type" value="Genomic_DNA"/>
</dbReference>
<dbReference type="RefSeq" id="WP_008195067.1">
    <property type="nucleotide sequence ID" value="NC_010483.1"/>
</dbReference>
<dbReference type="SMR" id="B1LBK1"/>
<dbReference type="KEGG" id="trq:TRQ2_1355"/>
<dbReference type="HOGENOM" id="CLU_117179_9_2_0"/>
<dbReference type="Proteomes" id="UP000001687">
    <property type="component" value="Chromosome"/>
</dbReference>
<dbReference type="GO" id="GO:0030677">
    <property type="term" value="C:ribonuclease P complex"/>
    <property type="evidence" value="ECO:0007669"/>
    <property type="project" value="TreeGrafter"/>
</dbReference>
<dbReference type="GO" id="GO:0042781">
    <property type="term" value="F:3'-tRNA processing endoribonuclease activity"/>
    <property type="evidence" value="ECO:0007669"/>
    <property type="project" value="TreeGrafter"/>
</dbReference>
<dbReference type="GO" id="GO:0004526">
    <property type="term" value="F:ribonuclease P activity"/>
    <property type="evidence" value="ECO:0007669"/>
    <property type="project" value="UniProtKB-UniRule"/>
</dbReference>
<dbReference type="GO" id="GO:0000049">
    <property type="term" value="F:tRNA binding"/>
    <property type="evidence" value="ECO:0007669"/>
    <property type="project" value="UniProtKB-UniRule"/>
</dbReference>
<dbReference type="GO" id="GO:0001682">
    <property type="term" value="P:tRNA 5'-leader removal"/>
    <property type="evidence" value="ECO:0007669"/>
    <property type="project" value="UniProtKB-UniRule"/>
</dbReference>
<dbReference type="FunFam" id="3.30.230.10:FF:000155">
    <property type="entry name" value="Ribonuclease P protein component"/>
    <property type="match status" value="1"/>
</dbReference>
<dbReference type="Gene3D" id="3.30.230.10">
    <property type="match status" value="1"/>
</dbReference>
<dbReference type="HAMAP" id="MF_00227">
    <property type="entry name" value="RNase_P"/>
    <property type="match status" value="1"/>
</dbReference>
<dbReference type="InterPro" id="IPR020568">
    <property type="entry name" value="Ribosomal_Su5_D2-typ_SF"/>
</dbReference>
<dbReference type="InterPro" id="IPR014721">
    <property type="entry name" value="Ribsml_uS5_D2-typ_fold_subgr"/>
</dbReference>
<dbReference type="InterPro" id="IPR000100">
    <property type="entry name" value="RNase_P"/>
</dbReference>
<dbReference type="InterPro" id="IPR020539">
    <property type="entry name" value="RNase_P_CS"/>
</dbReference>
<dbReference type="NCBIfam" id="TIGR00188">
    <property type="entry name" value="rnpA"/>
    <property type="match status" value="1"/>
</dbReference>
<dbReference type="PANTHER" id="PTHR33992">
    <property type="entry name" value="RIBONUCLEASE P PROTEIN COMPONENT"/>
    <property type="match status" value="1"/>
</dbReference>
<dbReference type="PANTHER" id="PTHR33992:SF1">
    <property type="entry name" value="RIBONUCLEASE P PROTEIN COMPONENT"/>
    <property type="match status" value="1"/>
</dbReference>
<dbReference type="Pfam" id="PF00825">
    <property type="entry name" value="Ribonuclease_P"/>
    <property type="match status" value="1"/>
</dbReference>
<dbReference type="SUPFAM" id="SSF54211">
    <property type="entry name" value="Ribosomal protein S5 domain 2-like"/>
    <property type="match status" value="1"/>
</dbReference>
<dbReference type="PROSITE" id="PS00648">
    <property type="entry name" value="RIBONUCLEASE_P"/>
    <property type="match status" value="1"/>
</dbReference>
<keyword id="KW-0255">Endonuclease</keyword>
<keyword id="KW-0378">Hydrolase</keyword>
<keyword id="KW-0540">Nuclease</keyword>
<keyword id="KW-0694">RNA-binding</keyword>
<keyword id="KW-0819">tRNA processing</keyword>
<organism>
    <name type="scientific">Thermotoga sp. (strain RQ2)</name>
    <dbReference type="NCBI Taxonomy" id="126740"/>
    <lineage>
        <taxon>Bacteria</taxon>
        <taxon>Thermotogati</taxon>
        <taxon>Thermotogota</taxon>
        <taxon>Thermotogae</taxon>
        <taxon>Thermotogales</taxon>
        <taxon>Thermotogaceae</taxon>
        <taxon>Thermotoga</taxon>
    </lineage>
</organism>
<proteinExistence type="inferred from homology"/>
<feature type="chain" id="PRO_1000100405" description="Ribonuclease P protein component">
    <location>
        <begin position="1"/>
        <end position="117"/>
    </location>
</feature>